<evidence type="ECO:0000255" key="1">
    <source>
        <dbReference type="HAMAP-Rule" id="MF_00382"/>
    </source>
</evidence>
<evidence type="ECO:0000305" key="2"/>
<protein>
    <recommendedName>
        <fullName evidence="1">Large ribosomal subunit protein bL20</fullName>
    </recommendedName>
    <alternativeName>
        <fullName evidence="2">50S ribosomal protein L20</fullName>
    </alternativeName>
</protein>
<sequence length="118" mass="13161">MARVKGGLGAKKRHNRTLKLAKGYRGARSKQYRVAKQSVMRALTSSYAGRKERKRQFRQLWIARINAAARLNGLSYSQFMHGLKLANVDLNRKVLADMAVTDAAGFAKLVEVAKSKLA</sequence>
<name>RL20_AGARV</name>
<reference key="1">
    <citation type="journal article" date="2009" name="Proc. Natl. Acad. Sci. U.S.A.">
        <title>Characterizing a model human gut microbiota composed of members of its two dominant bacterial phyla.</title>
        <authorList>
            <person name="Mahowald M.A."/>
            <person name="Rey F.E."/>
            <person name="Seedorf H."/>
            <person name="Turnbaugh P.J."/>
            <person name="Fulton R.S."/>
            <person name="Wollam A."/>
            <person name="Shah N."/>
            <person name="Wang C."/>
            <person name="Magrini V."/>
            <person name="Wilson R.K."/>
            <person name="Cantarel B.L."/>
            <person name="Coutinho P.M."/>
            <person name="Henrissat B."/>
            <person name="Crock L.W."/>
            <person name="Russell A."/>
            <person name="Verberkmoes N.C."/>
            <person name="Hettich R.L."/>
            <person name="Gordon J.I."/>
        </authorList>
    </citation>
    <scope>NUCLEOTIDE SEQUENCE [LARGE SCALE GENOMIC DNA]</scope>
    <source>
        <strain>ATCC 33656 / DSM 3377 / JCM 17463 / KCTC 5835 / LMG 30912 / VPI 0990</strain>
    </source>
</reference>
<feature type="chain" id="PRO_1000205712" description="Large ribosomal subunit protein bL20">
    <location>
        <begin position="1"/>
        <end position="118"/>
    </location>
</feature>
<keyword id="KW-0687">Ribonucleoprotein</keyword>
<keyword id="KW-0689">Ribosomal protein</keyword>
<keyword id="KW-0694">RNA-binding</keyword>
<keyword id="KW-0699">rRNA-binding</keyword>
<accession>C4ZBG1</accession>
<gene>
    <name evidence="1" type="primary">rplT</name>
    <name type="ordered locus">EUBREC_1951</name>
</gene>
<proteinExistence type="inferred from homology"/>
<dbReference type="EMBL" id="CP001107">
    <property type="protein sequence ID" value="ACR75693.1"/>
    <property type="molecule type" value="Genomic_DNA"/>
</dbReference>
<dbReference type="RefSeq" id="WP_012742790.1">
    <property type="nucleotide sequence ID" value="NZ_CAXSYD010000002.1"/>
</dbReference>
<dbReference type="SMR" id="C4ZBG1"/>
<dbReference type="STRING" id="515619.EUBREC_1951"/>
<dbReference type="PaxDb" id="515619-EUBREC_1951"/>
<dbReference type="GeneID" id="86988742"/>
<dbReference type="KEGG" id="ere:EUBREC_1951"/>
<dbReference type="HOGENOM" id="CLU_123265_0_1_9"/>
<dbReference type="Proteomes" id="UP000001477">
    <property type="component" value="Chromosome"/>
</dbReference>
<dbReference type="GO" id="GO:1990904">
    <property type="term" value="C:ribonucleoprotein complex"/>
    <property type="evidence" value="ECO:0007669"/>
    <property type="project" value="UniProtKB-KW"/>
</dbReference>
<dbReference type="GO" id="GO:0005840">
    <property type="term" value="C:ribosome"/>
    <property type="evidence" value="ECO:0007669"/>
    <property type="project" value="UniProtKB-KW"/>
</dbReference>
<dbReference type="GO" id="GO:0019843">
    <property type="term" value="F:rRNA binding"/>
    <property type="evidence" value="ECO:0007669"/>
    <property type="project" value="UniProtKB-UniRule"/>
</dbReference>
<dbReference type="GO" id="GO:0003735">
    <property type="term" value="F:structural constituent of ribosome"/>
    <property type="evidence" value="ECO:0007669"/>
    <property type="project" value="InterPro"/>
</dbReference>
<dbReference type="GO" id="GO:0000027">
    <property type="term" value="P:ribosomal large subunit assembly"/>
    <property type="evidence" value="ECO:0007669"/>
    <property type="project" value="UniProtKB-UniRule"/>
</dbReference>
<dbReference type="GO" id="GO:0006412">
    <property type="term" value="P:translation"/>
    <property type="evidence" value="ECO:0007669"/>
    <property type="project" value="InterPro"/>
</dbReference>
<dbReference type="CDD" id="cd07026">
    <property type="entry name" value="Ribosomal_L20"/>
    <property type="match status" value="1"/>
</dbReference>
<dbReference type="FunFam" id="1.10.1900.20:FF:000001">
    <property type="entry name" value="50S ribosomal protein L20"/>
    <property type="match status" value="1"/>
</dbReference>
<dbReference type="Gene3D" id="6.10.160.10">
    <property type="match status" value="1"/>
</dbReference>
<dbReference type="Gene3D" id="1.10.1900.20">
    <property type="entry name" value="Ribosomal protein L20"/>
    <property type="match status" value="1"/>
</dbReference>
<dbReference type="HAMAP" id="MF_00382">
    <property type="entry name" value="Ribosomal_bL20"/>
    <property type="match status" value="1"/>
</dbReference>
<dbReference type="InterPro" id="IPR005813">
    <property type="entry name" value="Ribosomal_bL20"/>
</dbReference>
<dbReference type="InterPro" id="IPR049946">
    <property type="entry name" value="RIBOSOMAL_L20_CS"/>
</dbReference>
<dbReference type="InterPro" id="IPR035566">
    <property type="entry name" value="Ribosomal_protein_bL20_C"/>
</dbReference>
<dbReference type="NCBIfam" id="TIGR01032">
    <property type="entry name" value="rplT_bact"/>
    <property type="match status" value="1"/>
</dbReference>
<dbReference type="PANTHER" id="PTHR10986">
    <property type="entry name" value="39S RIBOSOMAL PROTEIN L20"/>
    <property type="match status" value="1"/>
</dbReference>
<dbReference type="Pfam" id="PF00453">
    <property type="entry name" value="Ribosomal_L20"/>
    <property type="match status" value="1"/>
</dbReference>
<dbReference type="PRINTS" id="PR00062">
    <property type="entry name" value="RIBOSOMALL20"/>
</dbReference>
<dbReference type="SUPFAM" id="SSF74731">
    <property type="entry name" value="Ribosomal protein L20"/>
    <property type="match status" value="1"/>
</dbReference>
<dbReference type="PROSITE" id="PS00937">
    <property type="entry name" value="RIBOSOMAL_L20"/>
    <property type="match status" value="1"/>
</dbReference>
<organism>
    <name type="scientific">Agathobacter rectalis (strain ATCC 33656 / DSM 3377 / JCM 17463 / KCTC 5835 / VPI 0990)</name>
    <name type="common">Eubacterium rectale</name>
    <dbReference type="NCBI Taxonomy" id="515619"/>
    <lineage>
        <taxon>Bacteria</taxon>
        <taxon>Bacillati</taxon>
        <taxon>Bacillota</taxon>
        <taxon>Clostridia</taxon>
        <taxon>Lachnospirales</taxon>
        <taxon>Lachnospiraceae</taxon>
        <taxon>Agathobacter</taxon>
    </lineage>
</organism>
<comment type="function">
    <text evidence="1">Binds directly to 23S ribosomal RNA and is necessary for the in vitro assembly process of the 50S ribosomal subunit. It is not involved in the protein synthesizing functions of that subunit.</text>
</comment>
<comment type="similarity">
    <text evidence="1">Belongs to the bacterial ribosomal protein bL20 family.</text>
</comment>